<dbReference type="EMBL" id="AY116970">
    <property type="protein sequence ID" value="AAM77213.1"/>
    <property type="molecule type" value="mRNA"/>
</dbReference>
<dbReference type="EMBL" id="AK024966">
    <property type="protein sequence ID" value="BAB15045.1"/>
    <property type="molecule type" value="mRNA"/>
</dbReference>
<dbReference type="EMBL" id="AK293307">
    <property type="protein sequence ID" value="BAH11488.1"/>
    <property type="molecule type" value="mRNA"/>
</dbReference>
<dbReference type="EMBL" id="AK296267">
    <property type="protein sequence ID" value="BAH12297.1"/>
    <property type="molecule type" value="mRNA"/>
</dbReference>
<dbReference type="EMBL" id="AK300154">
    <property type="protein sequence ID" value="BAH13224.1"/>
    <property type="molecule type" value="mRNA"/>
</dbReference>
<dbReference type="EMBL" id="AK303857">
    <property type="protein sequence ID" value="BAH14068.1"/>
    <property type="molecule type" value="mRNA"/>
</dbReference>
<dbReference type="EMBL" id="AK316288">
    <property type="protein sequence ID" value="BAH14659.1"/>
    <property type="molecule type" value="mRNA"/>
</dbReference>
<dbReference type="EMBL" id="AC008546">
    <property type="status" value="NOT_ANNOTATED_CDS"/>
    <property type="molecule type" value="Genomic_DNA"/>
</dbReference>
<dbReference type="EMBL" id="AC093535">
    <property type="status" value="NOT_ANNOTATED_CDS"/>
    <property type="molecule type" value="Genomic_DNA"/>
</dbReference>
<dbReference type="EMBL" id="CH471086">
    <property type="protein sequence ID" value="EAW48852.1"/>
    <property type="molecule type" value="Genomic_DNA"/>
</dbReference>
<dbReference type="EMBL" id="CH471086">
    <property type="protein sequence ID" value="EAW48854.1"/>
    <property type="molecule type" value="Genomic_DNA"/>
</dbReference>
<dbReference type="EMBL" id="CH471086">
    <property type="protein sequence ID" value="EAW48855.1"/>
    <property type="molecule type" value="Genomic_DNA"/>
</dbReference>
<dbReference type="EMBL" id="BC008590">
    <property type="protein sequence ID" value="AAH08590.1"/>
    <property type="molecule type" value="mRNA"/>
</dbReference>
<dbReference type="CCDS" id="CCDS4136.1">
    <molecule id="Q96HH9-1"/>
</dbReference>
<dbReference type="CCDS" id="CCDS54891.1">
    <molecule id="Q96HH9-3"/>
</dbReference>
<dbReference type="CCDS" id="CCDS54892.1">
    <molecule id="Q96HH9-2"/>
</dbReference>
<dbReference type="CCDS" id="CCDS54893.1">
    <molecule id="Q96HH9-4"/>
</dbReference>
<dbReference type="CCDS" id="CCDS54894.1">
    <molecule id="Q96HH9-5"/>
</dbReference>
<dbReference type="RefSeq" id="NP_001139791.1">
    <molecule id="Q96HH9-3"/>
    <property type="nucleotide sequence ID" value="NM_001146319.3"/>
</dbReference>
<dbReference type="RefSeq" id="NP_001139792.1">
    <molecule id="Q96HH9-5"/>
    <property type="nucleotide sequence ID" value="NM_001146320.3"/>
</dbReference>
<dbReference type="RefSeq" id="NP_001139793.1">
    <molecule id="Q96HH9-2"/>
    <property type="nucleotide sequence ID" value="NM_001146321.3"/>
</dbReference>
<dbReference type="RefSeq" id="NP_001139794.1">
    <molecule id="Q96HH9-4"/>
    <property type="nucleotide sequence ID" value="NM_001146322.3"/>
</dbReference>
<dbReference type="RefSeq" id="NP_076416.2">
    <molecule id="Q96HH9-1"/>
    <property type="nucleotide sequence ID" value="NM_023927.4"/>
</dbReference>
<dbReference type="RefSeq" id="XP_005272120.1">
    <property type="nucleotide sequence ID" value="XM_005272063.3"/>
</dbReference>
<dbReference type="RefSeq" id="XP_016865274.1">
    <property type="nucleotide sequence ID" value="XM_017009785.1"/>
</dbReference>
<dbReference type="RefSeq" id="XP_047273568.1">
    <molecule id="Q96HH9-4"/>
    <property type="nucleotide sequence ID" value="XM_047417612.1"/>
</dbReference>
<dbReference type="RefSeq" id="XP_054209254.1">
    <molecule id="Q96HH9-4"/>
    <property type="nucleotide sequence ID" value="XM_054353279.1"/>
</dbReference>
<dbReference type="SMR" id="Q96HH9"/>
<dbReference type="BioGRID" id="122433">
    <property type="interactions" value="51"/>
</dbReference>
<dbReference type="FunCoup" id="Q96HH9">
    <property type="interactions" value="93"/>
</dbReference>
<dbReference type="IntAct" id="Q96HH9">
    <property type="interactions" value="36"/>
</dbReference>
<dbReference type="MINT" id="Q96HH9"/>
<dbReference type="STRING" id="9606.ENSP00000426120"/>
<dbReference type="GlyGen" id="Q96HH9">
    <property type="glycosylation" value="1 site"/>
</dbReference>
<dbReference type="iPTMnet" id="Q96HH9"/>
<dbReference type="PhosphoSitePlus" id="Q96HH9"/>
<dbReference type="SwissPalm" id="Q96HH9"/>
<dbReference type="BioMuta" id="GRAMD2B"/>
<dbReference type="DMDM" id="74731934"/>
<dbReference type="jPOST" id="Q96HH9"/>
<dbReference type="MassIVE" id="Q96HH9"/>
<dbReference type="PaxDb" id="9606-ENSP00000426120"/>
<dbReference type="PeptideAtlas" id="Q96HH9"/>
<dbReference type="ProteomicsDB" id="6327"/>
<dbReference type="ProteomicsDB" id="76749">
    <molecule id="Q96HH9-1"/>
</dbReference>
<dbReference type="ProteomicsDB" id="76750">
    <molecule id="Q96HH9-2"/>
</dbReference>
<dbReference type="ProteomicsDB" id="76751">
    <molecule id="Q96HH9-3"/>
</dbReference>
<dbReference type="ProteomicsDB" id="76752">
    <molecule id="Q96HH9-4"/>
</dbReference>
<dbReference type="Pumba" id="Q96HH9"/>
<dbReference type="Antibodypedia" id="2140">
    <property type="antibodies" value="209 antibodies from 24 providers"/>
</dbReference>
<dbReference type="DNASU" id="65983"/>
<dbReference type="Ensembl" id="ENST00000285689.8">
    <molecule id="Q96HH9-1"/>
    <property type="protein sequence ID" value="ENSP00000285689.3"/>
    <property type="gene ID" value="ENSG00000155324.10"/>
</dbReference>
<dbReference type="Ensembl" id="ENST00000511134.1">
    <molecule id="Q96HH9-4"/>
    <property type="protein sequence ID" value="ENSP00000426088.1"/>
    <property type="gene ID" value="ENSG00000155324.10"/>
</dbReference>
<dbReference type="Ensembl" id="ENST00000513040.5">
    <molecule id="Q96HH9-3"/>
    <property type="protein sequence ID" value="ENSP00000426120.1"/>
    <property type="gene ID" value="ENSG00000155324.10"/>
</dbReference>
<dbReference type="Ensembl" id="ENST00000542322.5">
    <molecule id="Q96HH9-2"/>
    <property type="protein sequence ID" value="ENSP00000441876.1"/>
    <property type="gene ID" value="ENSG00000155324.10"/>
</dbReference>
<dbReference type="Ensembl" id="ENST00000544396.5">
    <molecule id="Q96HH9-5"/>
    <property type="protein sequence ID" value="ENSP00000444049.1"/>
    <property type="gene ID" value="ENSG00000155324.10"/>
</dbReference>
<dbReference type="GeneID" id="65983"/>
<dbReference type="KEGG" id="hsa:65983"/>
<dbReference type="MANE-Select" id="ENST00000285689.8">
    <property type="protein sequence ID" value="ENSP00000285689.3"/>
    <property type="RefSeq nucleotide sequence ID" value="NM_023927.4"/>
    <property type="RefSeq protein sequence ID" value="NP_076416.2"/>
</dbReference>
<dbReference type="UCSC" id="uc003ktu.4">
    <molecule id="Q96HH9-1"/>
    <property type="organism name" value="human"/>
</dbReference>
<dbReference type="AGR" id="HGNC:24911"/>
<dbReference type="CTD" id="65983"/>
<dbReference type="DisGeNET" id="65983"/>
<dbReference type="GeneCards" id="GRAMD2B"/>
<dbReference type="HGNC" id="HGNC:24911">
    <property type="gene designation" value="GRAMD2B"/>
</dbReference>
<dbReference type="HPA" id="ENSG00000155324">
    <property type="expression patterns" value="Low tissue specificity"/>
</dbReference>
<dbReference type="MIM" id="620182">
    <property type="type" value="gene"/>
</dbReference>
<dbReference type="neXtProt" id="NX_Q96HH9"/>
<dbReference type="OpenTargets" id="ENSG00000155324"/>
<dbReference type="PharmGKB" id="PA142671711"/>
<dbReference type="VEuPathDB" id="HostDB:ENSG00000155324"/>
<dbReference type="eggNOG" id="KOG1032">
    <property type="taxonomic scope" value="Eukaryota"/>
</dbReference>
<dbReference type="GeneTree" id="ENSGT00940000156980"/>
<dbReference type="InParanoid" id="Q96HH9"/>
<dbReference type="OMA" id="ICSTFYM"/>
<dbReference type="OrthoDB" id="74360at2759"/>
<dbReference type="PAN-GO" id="Q96HH9">
    <property type="GO annotations" value="1 GO annotation based on evolutionary models"/>
</dbReference>
<dbReference type="PhylomeDB" id="Q96HH9"/>
<dbReference type="TreeFam" id="TF332065"/>
<dbReference type="PathwayCommons" id="Q96HH9"/>
<dbReference type="SignaLink" id="Q96HH9"/>
<dbReference type="BioGRID-ORCS" id="65983">
    <property type="hits" value="23 hits in 1149 CRISPR screens"/>
</dbReference>
<dbReference type="ChiTaRS" id="GRAMD2B">
    <property type="organism name" value="human"/>
</dbReference>
<dbReference type="GenomeRNAi" id="65983"/>
<dbReference type="Pharos" id="Q96HH9">
    <property type="development level" value="Tdark"/>
</dbReference>
<dbReference type="PRO" id="PR:Q96HH9"/>
<dbReference type="Proteomes" id="UP000005640">
    <property type="component" value="Chromosome 5"/>
</dbReference>
<dbReference type="RNAct" id="Q96HH9">
    <property type="molecule type" value="protein"/>
</dbReference>
<dbReference type="Bgee" id="ENSG00000155324">
    <property type="expression patterns" value="Expressed in calcaneal tendon and 193 other cell types or tissues"/>
</dbReference>
<dbReference type="ExpressionAtlas" id="Q96HH9">
    <property type="expression patterns" value="baseline and differential"/>
</dbReference>
<dbReference type="GO" id="GO:0005881">
    <property type="term" value="C:cytoplasmic microtubule"/>
    <property type="evidence" value="ECO:0000314"/>
    <property type="project" value="UniProtKB"/>
</dbReference>
<dbReference type="GO" id="GO:0042802">
    <property type="term" value="F:identical protein binding"/>
    <property type="evidence" value="ECO:0000353"/>
    <property type="project" value="IntAct"/>
</dbReference>
<dbReference type="CDD" id="cd13220">
    <property type="entry name" value="PH-GRAM_GRAMDC"/>
    <property type="match status" value="1"/>
</dbReference>
<dbReference type="FunFam" id="2.30.29.30:FF:000086">
    <property type="entry name" value="GRAM domain-containing protein 2B isoform 2"/>
    <property type="match status" value="1"/>
</dbReference>
<dbReference type="Gene3D" id="2.30.29.30">
    <property type="entry name" value="Pleckstrin-homology domain (PH domain)/Phosphotyrosine-binding domain (PTB)"/>
    <property type="match status" value="1"/>
</dbReference>
<dbReference type="InterPro" id="IPR004182">
    <property type="entry name" value="GRAM"/>
</dbReference>
<dbReference type="InterPro" id="IPR052633">
    <property type="entry name" value="GRAM_domain_protein_2B"/>
</dbReference>
<dbReference type="InterPro" id="IPR011993">
    <property type="entry name" value="PH-like_dom_sf"/>
</dbReference>
<dbReference type="PANTHER" id="PTHR46645:SF2">
    <property type="entry name" value="GRAM DOMAIN-CONTAINING PROTEIN 2B"/>
    <property type="match status" value="1"/>
</dbReference>
<dbReference type="PANTHER" id="PTHR46645">
    <property type="entry name" value="GRAM DOMAIN-CONTAINING PROTEIN 2B-RELATED"/>
    <property type="match status" value="1"/>
</dbReference>
<dbReference type="Pfam" id="PF02893">
    <property type="entry name" value="GRAM"/>
    <property type="match status" value="1"/>
</dbReference>
<dbReference type="SMART" id="SM00568">
    <property type="entry name" value="GRAM"/>
    <property type="match status" value="1"/>
</dbReference>
<comment type="interaction">
    <interactant intactId="EBI-2832937">
        <id>Q96HH9</id>
    </interactant>
    <interactant intactId="EBI-10175342">
        <id>B0B1U2</id>
        <label>ABO</label>
    </interactant>
    <organismsDiffer>false</organismsDiffer>
    <experiments>3</experiments>
</comment>
<comment type="interaction">
    <interactant intactId="EBI-2832937">
        <id>Q96HH9</id>
    </interactant>
    <interactant intactId="EBI-2873235">
        <id>Q9UJ71</id>
        <label>CD207</label>
    </interactant>
    <organismsDiffer>false</organismsDiffer>
    <experiments>6</experiments>
</comment>
<comment type="interaction">
    <interactant intactId="EBI-2832937">
        <id>Q96HH9</id>
    </interactant>
    <interactant intactId="EBI-295634">
        <id>Q16543</id>
        <label>CDC37</label>
    </interactant>
    <organismsDiffer>false</organismsDiffer>
    <experiments>3</experiments>
</comment>
<comment type="interaction">
    <interactant intactId="EBI-2832937">
        <id>Q96HH9</id>
    </interactant>
    <interactant intactId="EBI-5773072">
        <id>Q9BZ67</id>
        <label>FRMD8</label>
    </interactant>
    <organismsDiffer>false</organismsDiffer>
    <experiments>6</experiments>
</comment>
<comment type="interaction">
    <interactant intactId="EBI-2832937">
        <id>Q96HH9</id>
    </interactant>
    <interactant intactId="EBI-6166686">
        <id>Q96F15</id>
        <label>GIMAP5</label>
    </interactant>
    <organismsDiffer>false</organismsDiffer>
    <experiments>3</experiments>
</comment>
<comment type="interaction">
    <interactant intactId="EBI-2832937">
        <id>Q96HH9</id>
    </interactant>
    <interactant intactId="EBI-2832937">
        <id>Q96HH9</id>
        <label>GRAMD2B</label>
    </interactant>
    <organismsDiffer>false</organismsDiffer>
    <experiments>4</experiments>
</comment>
<comment type="interaction">
    <interactant intactId="EBI-2832937">
        <id>Q96HH9</id>
    </interactant>
    <interactant intactId="EBI-399257">
        <id>Q15014</id>
        <label>MORF4L2</label>
    </interactant>
    <organismsDiffer>false</organismsDiffer>
    <experiments>3</experiments>
</comment>
<comment type="interaction">
    <interactant intactId="EBI-2832937">
        <id>Q96HH9</id>
    </interactant>
    <interactant intactId="EBI-10254872">
        <id>Q6XQN6</id>
        <label>NAPRT</label>
    </interactant>
    <organismsDiffer>false</organismsDiffer>
    <experiments>3</experiments>
</comment>
<comment type="interaction">
    <interactant intactId="EBI-2832937">
        <id>Q96HH9</id>
    </interactant>
    <interactant intactId="EBI-465167">
        <id>P09466</id>
        <label>PAEP</label>
    </interactant>
    <organismsDiffer>false</organismsDiffer>
    <experiments>8</experiments>
</comment>
<comment type="interaction">
    <interactant intactId="EBI-2832937">
        <id>Q96HH9</id>
    </interactant>
    <interactant intactId="EBI-8652744">
        <id>Q96IW7</id>
        <label>SEC22A</label>
    </interactant>
    <organismsDiffer>false</organismsDiffer>
    <experiments>3</experiments>
</comment>
<comment type="interaction">
    <interactant intactId="EBI-2832937">
        <id>Q96HH9</id>
    </interactant>
    <interactant intactId="EBI-721293">
        <id>Q9BTV4</id>
        <label>TMEM43</label>
    </interactant>
    <organismsDiffer>false</organismsDiffer>
    <experiments>6</experiments>
</comment>
<comment type="interaction">
    <interactant intactId="EBI-2832937">
        <id>Q96HH9</id>
    </interactant>
    <interactant intactId="EBI-10191195">
        <id>O95183</id>
        <label>VAMP5</label>
    </interactant>
    <organismsDiffer>false</organismsDiffer>
    <experiments>3</experiments>
</comment>
<comment type="alternative products">
    <event type="alternative splicing"/>
    <isoform>
        <id>Q96HH9-1</id>
        <name>1</name>
        <sequence type="displayed"/>
    </isoform>
    <isoform>
        <id>Q96HH9-2</id>
        <name>2</name>
        <sequence type="described" ref="VSP_042883"/>
    </isoform>
    <isoform>
        <id>Q96HH9-3</id>
        <name>3</name>
        <sequence type="described" ref="VSP_042884"/>
    </isoform>
    <isoform>
        <id>Q96HH9-4</id>
        <name>4</name>
        <sequence type="described" ref="VSP_042885"/>
    </isoform>
    <isoform>
        <id>Q96HH9-5</id>
        <name>5</name>
        <sequence type="described" ref="VSP_044298 VSP_044299"/>
    </isoform>
</comment>
<evidence type="ECO:0000250" key="1">
    <source>
        <dbReference type="UniProtKB" id="Q6PEM6"/>
    </source>
</evidence>
<evidence type="ECO:0000256" key="2">
    <source>
        <dbReference type="SAM" id="MobiDB-lite"/>
    </source>
</evidence>
<evidence type="ECO:0000303" key="3">
    <source>
    </source>
</evidence>
<evidence type="ECO:0000305" key="4"/>
<evidence type="ECO:0007744" key="5">
    <source>
    </source>
</evidence>
<evidence type="ECO:0007744" key="6">
    <source>
    </source>
</evidence>
<evidence type="ECO:0007744" key="7">
    <source>
    </source>
</evidence>
<evidence type="ECO:0007744" key="8">
    <source>
    </source>
</evidence>
<evidence type="ECO:0007744" key="9">
    <source>
    </source>
</evidence>
<accession>Q96HH9</accession>
<accession>B7Z1F2</accession>
<accession>B7Z3R1</accession>
<accession>B7Z6D8</accession>
<accession>B7Z8T2</accession>
<accession>D3DSZ3</accession>
<accession>Q9H753</accession>
<reference key="1">
    <citation type="submission" date="2002-06" db="EMBL/GenBank/DDBJ databases">
        <title>Cloning and identification of human gene 2 transactivated by hepatitis C virus NS3 protein.</title>
        <authorList>
            <person name="Liu Y."/>
            <person name="Cheng J."/>
            <person name="Mu J."/>
            <person name="Wang G."/>
            <person name="Zhang L."/>
            <person name="Chen J."/>
            <person name="Li L."/>
        </authorList>
    </citation>
    <scope>NUCLEOTIDE SEQUENCE [MRNA] (ISOFORM 1)</scope>
</reference>
<reference key="2">
    <citation type="journal article" date="2004" name="Nat. Genet.">
        <title>Complete sequencing and characterization of 21,243 full-length human cDNAs.</title>
        <authorList>
            <person name="Ota T."/>
            <person name="Suzuki Y."/>
            <person name="Nishikawa T."/>
            <person name="Otsuki T."/>
            <person name="Sugiyama T."/>
            <person name="Irie R."/>
            <person name="Wakamatsu A."/>
            <person name="Hayashi K."/>
            <person name="Sato H."/>
            <person name="Nagai K."/>
            <person name="Kimura K."/>
            <person name="Makita H."/>
            <person name="Sekine M."/>
            <person name="Obayashi M."/>
            <person name="Nishi T."/>
            <person name="Shibahara T."/>
            <person name="Tanaka T."/>
            <person name="Ishii S."/>
            <person name="Yamamoto J."/>
            <person name="Saito K."/>
            <person name="Kawai Y."/>
            <person name="Isono Y."/>
            <person name="Nakamura Y."/>
            <person name="Nagahari K."/>
            <person name="Murakami K."/>
            <person name="Yasuda T."/>
            <person name="Iwayanagi T."/>
            <person name="Wagatsuma M."/>
            <person name="Shiratori A."/>
            <person name="Sudo H."/>
            <person name="Hosoiri T."/>
            <person name="Kaku Y."/>
            <person name="Kodaira H."/>
            <person name="Kondo H."/>
            <person name="Sugawara M."/>
            <person name="Takahashi M."/>
            <person name="Kanda K."/>
            <person name="Yokoi T."/>
            <person name="Furuya T."/>
            <person name="Kikkawa E."/>
            <person name="Omura Y."/>
            <person name="Abe K."/>
            <person name="Kamihara K."/>
            <person name="Katsuta N."/>
            <person name="Sato K."/>
            <person name="Tanikawa M."/>
            <person name="Yamazaki M."/>
            <person name="Ninomiya K."/>
            <person name="Ishibashi T."/>
            <person name="Yamashita H."/>
            <person name="Murakawa K."/>
            <person name="Fujimori K."/>
            <person name="Tanai H."/>
            <person name="Kimata M."/>
            <person name="Watanabe M."/>
            <person name="Hiraoka S."/>
            <person name="Chiba Y."/>
            <person name="Ishida S."/>
            <person name="Ono Y."/>
            <person name="Takiguchi S."/>
            <person name="Watanabe S."/>
            <person name="Yosida M."/>
            <person name="Hotuta T."/>
            <person name="Kusano J."/>
            <person name="Kanehori K."/>
            <person name="Takahashi-Fujii A."/>
            <person name="Hara H."/>
            <person name="Tanase T.-O."/>
            <person name="Nomura Y."/>
            <person name="Togiya S."/>
            <person name="Komai F."/>
            <person name="Hara R."/>
            <person name="Takeuchi K."/>
            <person name="Arita M."/>
            <person name="Imose N."/>
            <person name="Musashino K."/>
            <person name="Yuuki H."/>
            <person name="Oshima A."/>
            <person name="Sasaki N."/>
            <person name="Aotsuka S."/>
            <person name="Yoshikawa Y."/>
            <person name="Matsunawa H."/>
            <person name="Ichihara T."/>
            <person name="Shiohata N."/>
            <person name="Sano S."/>
            <person name="Moriya S."/>
            <person name="Momiyama H."/>
            <person name="Satoh N."/>
            <person name="Takami S."/>
            <person name="Terashima Y."/>
            <person name="Suzuki O."/>
            <person name="Nakagawa S."/>
            <person name="Senoh A."/>
            <person name="Mizoguchi H."/>
            <person name="Goto Y."/>
            <person name="Shimizu F."/>
            <person name="Wakebe H."/>
            <person name="Hishigaki H."/>
            <person name="Watanabe T."/>
            <person name="Sugiyama A."/>
            <person name="Takemoto M."/>
            <person name="Kawakami B."/>
            <person name="Yamazaki M."/>
            <person name="Watanabe K."/>
            <person name="Kumagai A."/>
            <person name="Itakura S."/>
            <person name="Fukuzumi Y."/>
            <person name="Fujimori Y."/>
            <person name="Komiyama M."/>
            <person name="Tashiro H."/>
            <person name="Tanigami A."/>
            <person name="Fujiwara T."/>
            <person name="Ono T."/>
            <person name="Yamada K."/>
            <person name="Fujii Y."/>
            <person name="Ozaki K."/>
            <person name="Hirao M."/>
            <person name="Ohmori Y."/>
            <person name="Kawabata A."/>
            <person name="Hikiji T."/>
            <person name="Kobatake N."/>
            <person name="Inagaki H."/>
            <person name="Ikema Y."/>
            <person name="Okamoto S."/>
            <person name="Okitani R."/>
            <person name="Kawakami T."/>
            <person name="Noguchi S."/>
            <person name="Itoh T."/>
            <person name="Shigeta K."/>
            <person name="Senba T."/>
            <person name="Matsumura K."/>
            <person name="Nakajima Y."/>
            <person name="Mizuno T."/>
            <person name="Morinaga M."/>
            <person name="Sasaki M."/>
            <person name="Togashi T."/>
            <person name="Oyama M."/>
            <person name="Hata H."/>
            <person name="Watanabe M."/>
            <person name="Komatsu T."/>
            <person name="Mizushima-Sugano J."/>
            <person name="Satoh T."/>
            <person name="Shirai Y."/>
            <person name="Takahashi Y."/>
            <person name="Nakagawa K."/>
            <person name="Okumura K."/>
            <person name="Nagase T."/>
            <person name="Nomura N."/>
            <person name="Kikuchi H."/>
            <person name="Masuho Y."/>
            <person name="Yamashita R."/>
            <person name="Nakai K."/>
            <person name="Yada T."/>
            <person name="Nakamura Y."/>
            <person name="Ohara O."/>
            <person name="Isogai T."/>
            <person name="Sugano S."/>
        </authorList>
    </citation>
    <scope>NUCLEOTIDE SEQUENCE [LARGE SCALE MRNA] (ISOFORMS 1; 2; 3; 4 AND 5)</scope>
    <source>
        <tissue>Colon</tissue>
        <tissue>Placenta</tissue>
        <tissue>Thalamus</tissue>
        <tissue>Trachea</tissue>
    </source>
</reference>
<reference key="3">
    <citation type="journal article" date="2004" name="Nature">
        <title>The DNA sequence and comparative analysis of human chromosome 5.</title>
        <authorList>
            <person name="Schmutz J."/>
            <person name="Martin J."/>
            <person name="Terry A."/>
            <person name="Couronne O."/>
            <person name="Grimwood J."/>
            <person name="Lowry S."/>
            <person name="Gordon L.A."/>
            <person name="Scott D."/>
            <person name="Xie G."/>
            <person name="Huang W."/>
            <person name="Hellsten U."/>
            <person name="Tran-Gyamfi M."/>
            <person name="She X."/>
            <person name="Prabhakar S."/>
            <person name="Aerts A."/>
            <person name="Altherr M."/>
            <person name="Bajorek E."/>
            <person name="Black S."/>
            <person name="Branscomb E."/>
            <person name="Caoile C."/>
            <person name="Challacombe J.F."/>
            <person name="Chan Y.M."/>
            <person name="Denys M."/>
            <person name="Detter J.C."/>
            <person name="Escobar J."/>
            <person name="Flowers D."/>
            <person name="Fotopulos D."/>
            <person name="Glavina T."/>
            <person name="Gomez M."/>
            <person name="Gonzales E."/>
            <person name="Goodstein D."/>
            <person name="Grigoriev I."/>
            <person name="Groza M."/>
            <person name="Hammon N."/>
            <person name="Hawkins T."/>
            <person name="Haydu L."/>
            <person name="Israni S."/>
            <person name="Jett J."/>
            <person name="Kadner K."/>
            <person name="Kimball H."/>
            <person name="Kobayashi A."/>
            <person name="Lopez F."/>
            <person name="Lou Y."/>
            <person name="Martinez D."/>
            <person name="Medina C."/>
            <person name="Morgan J."/>
            <person name="Nandkeshwar R."/>
            <person name="Noonan J.P."/>
            <person name="Pitluck S."/>
            <person name="Pollard M."/>
            <person name="Predki P."/>
            <person name="Priest J."/>
            <person name="Ramirez L."/>
            <person name="Retterer J."/>
            <person name="Rodriguez A."/>
            <person name="Rogers S."/>
            <person name="Salamov A."/>
            <person name="Salazar A."/>
            <person name="Thayer N."/>
            <person name="Tice H."/>
            <person name="Tsai M."/>
            <person name="Ustaszewska A."/>
            <person name="Vo N."/>
            <person name="Wheeler J."/>
            <person name="Wu K."/>
            <person name="Yang J."/>
            <person name="Dickson M."/>
            <person name="Cheng J.-F."/>
            <person name="Eichler E.E."/>
            <person name="Olsen A."/>
            <person name="Pennacchio L.A."/>
            <person name="Rokhsar D.S."/>
            <person name="Richardson P."/>
            <person name="Lucas S.M."/>
            <person name="Myers R.M."/>
            <person name="Rubin E.M."/>
        </authorList>
    </citation>
    <scope>NUCLEOTIDE SEQUENCE [LARGE SCALE GENOMIC DNA]</scope>
</reference>
<reference key="4">
    <citation type="submission" date="2005-09" db="EMBL/GenBank/DDBJ databases">
        <authorList>
            <person name="Mural R.J."/>
            <person name="Istrail S."/>
            <person name="Sutton G.G."/>
            <person name="Florea L."/>
            <person name="Halpern A.L."/>
            <person name="Mobarry C.M."/>
            <person name="Lippert R."/>
            <person name="Walenz B."/>
            <person name="Shatkay H."/>
            <person name="Dew I."/>
            <person name="Miller J.R."/>
            <person name="Flanigan M.J."/>
            <person name="Edwards N.J."/>
            <person name="Bolanos R."/>
            <person name="Fasulo D."/>
            <person name="Halldorsson B.V."/>
            <person name="Hannenhalli S."/>
            <person name="Turner R."/>
            <person name="Yooseph S."/>
            <person name="Lu F."/>
            <person name="Nusskern D.R."/>
            <person name="Shue B.C."/>
            <person name="Zheng X.H."/>
            <person name="Zhong F."/>
            <person name="Delcher A.L."/>
            <person name="Huson D.H."/>
            <person name="Kravitz S.A."/>
            <person name="Mouchard L."/>
            <person name="Reinert K."/>
            <person name="Remington K.A."/>
            <person name="Clark A.G."/>
            <person name="Waterman M.S."/>
            <person name="Eichler E.E."/>
            <person name="Adams M.D."/>
            <person name="Hunkapiller M.W."/>
            <person name="Myers E.W."/>
            <person name="Venter J.C."/>
        </authorList>
    </citation>
    <scope>NUCLEOTIDE SEQUENCE [LARGE SCALE GENOMIC DNA]</scope>
</reference>
<reference key="5">
    <citation type="journal article" date="2004" name="Genome Res.">
        <title>The status, quality, and expansion of the NIH full-length cDNA project: the Mammalian Gene Collection (MGC).</title>
        <authorList>
            <consortium name="The MGC Project Team"/>
        </authorList>
    </citation>
    <scope>NUCLEOTIDE SEQUENCE [LARGE SCALE MRNA] (ISOFORM 1)</scope>
    <source>
        <tissue>Brain</tissue>
    </source>
</reference>
<reference key="6">
    <citation type="journal article" date="2006" name="Cell">
        <title>Global, in vivo, and site-specific phosphorylation dynamics in signaling networks.</title>
        <authorList>
            <person name="Olsen J.V."/>
            <person name="Blagoev B."/>
            <person name="Gnad F."/>
            <person name="Macek B."/>
            <person name="Kumar C."/>
            <person name="Mortensen P."/>
            <person name="Mann M."/>
        </authorList>
    </citation>
    <scope>PHOSPHORYLATION [LARGE SCALE ANALYSIS] AT SER-252</scope>
    <scope>IDENTIFICATION BY MASS SPECTROMETRY [LARGE SCALE ANALYSIS]</scope>
    <source>
        <tissue>Cervix carcinoma</tissue>
    </source>
</reference>
<reference key="7">
    <citation type="journal article" date="2008" name="J. Proteome Res.">
        <title>Combining protein-based IMAC, peptide-based IMAC, and MudPIT for efficient phosphoproteomic analysis.</title>
        <authorList>
            <person name="Cantin G.T."/>
            <person name="Yi W."/>
            <person name="Lu B."/>
            <person name="Park S.K."/>
            <person name="Xu T."/>
            <person name="Lee J.-D."/>
            <person name="Yates J.R. III"/>
        </authorList>
    </citation>
    <scope>PHOSPHORYLATION [LARGE SCALE ANALYSIS] AT SER-252</scope>
    <scope>IDENTIFICATION BY MASS SPECTROMETRY [LARGE SCALE ANALYSIS]</scope>
    <source>
        <tissue>Cervix carcinoma</tissue>
    </source>
</reference>
<reference key="8">
    <citation type="journal article" date="2008" name="Proc. Natl. Acad. Sci. U.S.A.">
        <title>A quantitative atlas of mitotic phosphorylation.</title>
        <authorList>
            <person name="Dephoure N."/>
            <person name="Zhou C."/>
            <person name="Villen J."/>
            <person name="Beausoleil S.A."/>
            <person name="Bakalarski C.E."/>
            <person name="Elledge S.J."/>
            <person name="Gygi S.P."/>
        </authorList>
    </citation>
    <scope>PHOSPHORYLATION [LARGE SCALE ANALYSIS] AT SER-252</scope>
    <scope>IDENTIFICATION BY MASS SPECTROMETRY [LARGE SCALE ANALYSIS]</scope>
    <source>
        <tissue>Cervix carcinoma</tissue>
    </source>
</reference>
<reference key="9">
    <citation type="journal article" date="2010" name="Sci. Signal.">
        <title>Quantitative phosphoproteomics reveals widespread full phosphorylation site occupancy during mitosis.</title>
        <authorList>
            <person name="Olsen J.V."/>
            <person name="Vermeulen M."/>
            <person name="Santamaria A."/>
            <person name="Kumar C."/>
            <person name="Miller M.L."/>
            <person name="Jensen L.J."/>
            <person name="Gnad F."/>
            <person name="Cox J."/>
            <person name="Jensen T.S."/>
            <person name="Nigg E.A."/>
            <person name="Brunak S."/>
            <person name="Mann M."/>
        </authorList>
    </citation>
    <scope>PHOSPHORYLATION [LARGE SCALE ANALYSIS] AT SER-252</scope>
    <scope>IDENTIFICATION BY MASS SPECTROMETRY [LARGE SCALE ANALYSIS]</scope>
    <source>
        <tissue>Cervix carcinoma</tissue>
    </source>
</reference>
<reference key="10">
    <citation type="journal article" date="2011" name="Sci. Signal.">
        <title>System-wide temporal characterization of the proteome and phosphoproteome of human embryonic stem cell differentiation.</title>
        <authorList>
            <person name="Rigbolt K.T."/>
            <person name="Prokhorova T.A."/>
            <person name="Akimov V."/>
            <person name="Henningsen J."/>
            <person name="Johansen P.T."/>
            <person name="Kratchmarova I."/>
            <person name="Kassem M."/>
            <person name="Mann M."/>
            <person name="Olsen J.V."/>
            <person name="Blagoev B."/>
        </authorList>
    </citation>
    <scope>IDENTIFICATION BY MASS SPECTROMETRY [LARGE SCALE ANALYSIS]</scope>
</reference>
<reference key="11">
    <citation type="journal article" date="2012" name="Proc. Natl. Acad. Sci. U.S.A.">
        <title>N-terminal acetylome analyses and functional insights of the N-terminal acetyltransferase NatB.</title>
        <authorList>
            <person name="Van Damme P."/>
            <person name="Lasa M."/>
            <person name="Polevoda B."/>
            <person name="Gazquez C."/>
            <person name="Elosegui-Artola A."/>
            <person name="Kim D.S."/>
            <person name="De Juan-Pardo E."/>
            <person name="Demeyer K."/>
            <person name="Hole K."/>
            <person name="Larrea E."/>
            <person name="Timmerman E."/>
            <person name="Prieto J."/>
            <person name="Arnesen T."/>
            <person name="Sherman F."/>
            <person name="Gevaert K."/>
            <person name="Aldabe R."/>
        </authorList>
    </citation>
    <scope>ACETYLATION [LARGE SCALE ANALYSIS] AT MET-1</scope>
    <scope>IDENTIFICATION BY MASS SPECTROMETRY [LARGE SCALE ANALYSIS]</scope>
</reference>
<organism>
    <name type="scientific">Homo sapiens</name>
    <name type="common">Human</name>
    <dbReference type="NCBI Taxonomy" id="9606"/>
    <lineage>
        <taxon>Eukaryota</taxon>
        <taxon>Metazoa</taxon>
        <taxon>Chordata</taxon>
        <taxon>Craniata</taxon>
        <taxon>Vertebrata</taxon>
        <taxon>Euteleostomi</taxon>
        <taxon>Mammalia</taxon>
        <taxon>Eutheria</taxon>
        <taxon>Euarchontoglires</taxon>
        <taxon>Primates</taxon>
        <taxon>Haplorrhini</taxon>
        <taxon>Catarrhini</taxon>
        <taxon>Hominidae</taxon>
        <taxon>Homo</taxon>
    </lineage>
</organism>
<gene>
    <name type="primary">GRAMD2B</name>
    <name type="synonym">GRAMD3</name>
    <name type="synonym">NS3TP2</name>
</gene>
<name>GRM2B_HUMAN</name>
<proteinExistence type="evidence at protein level"/>
<protein>
    <recommendedName>
        <fullName>GRAM domain-containing protein 2B</fullName>
    </recommendedName>
    <alternativeName>
        <fullName>HCV NS3-transactivated protein 2</fullName>
    </alternativeName>
</protein>
<feature type="chain" id="PRO_0000087577" description="GRAM domain-containing protein 2B">
    <location>
        <begin position="1"/>
        <end position="432"/>
    </location>
</feature>
<feature type="domain" description="GRAM">
    <location>
        <begin position="110"/>
        <end position="177"/>
    </location>
</feature>
<feature type="region of interest" description="Disordered" evidence="2">
    <location>
        <begin position="1"/>
        <end position="61"/>
    </location>
</feature>
<feature type="region of interest" description="Disordered" evidence="2">
    <location>
        <begin position="74"/>
        <end position="106"/>
    </location>
</feature>
<feature type="region of interest" description="Disordered" evidence="2">
    <location>
        <begin position="220"/>
        <end position="239"/>
    </location>
</feature>
<feature type="region of interest" description="Disordered" evidence="2">
    <location>
        <begin position="262"/>
        <end position="285"/>
    </location>
</feature>
<feature type="compositionally biased region" description="Basic and acidic residues" evidence="2">
    <location>
        <begin position="9"/>
        <end position="39"/>
    </location>
</feature>
<feature type="compositionally biased region" description="Basic and acidic residues" evidence="2">
    <location>
        <begin position="81"/>
        <end position="99"/>
    </location>
</feature>
<feature type="compositionally biased region" description="Polar residues" evidence="2">
    <location>
        <begin position="220"/>
        <end position="233"/>
    </location>
</feature>
<feature type="compositionally biased region" description="Polar residues" evidence="2">
    <location>
        <begin position="268"/>
        <end position="278"/>
    </location>
</feature>
<feature type="modified residue" description="N-acetylmethionine" evidence="9">
    <location>
        <position position="1"/>
    </location>
</feature>
<feature type="modified residue" description="Phosphoserine" evidence="1">
    <location>
        <position position="225"/>
    </location>
</feature>
<feature type="modified residue" description="Phosphoserine" evidence="1">
    <location>
        <position position="242"/>
    </location>
</feature>
<feature type="modified residue" description="Phosphoserine" evidence="5 6 7 8">
    <location>
        <position position="252"/>
    </location>
</feature>
<feature type="splice variant" id="VSP_044298" description="In isoform 5." evidence="3">
    <location>
        <begin position="1"/>
        <end position="104"/>
    </location>
</feature>
<feature type="splice variant" id="VSP_042883" description="In isoform 2." evidence="3">
    <original>MTELQQDVEDTKPAKVLGKRESKLGSAHSEAENGVEEKKKACRSPTAQSPTPSVEADSPDQKKIISLW</original>
    <variation>MWKTQSLRKCSGRGRANLAQPTQRLRMVWRRKRKPAGRQQPNPLPHLWRRTPQTRRKSLAYAHIFSPNLCFIQDQE</variation>
    <location>
        <begin position="1"/>
        <end position="68"/>
    </location>
</feature>
<feature type="splice variant" id="VSP_042884" description="In isoform 3." evidence="3">
    <original>MTELQQDVEDTKPAKVLGKRESKLGSAH</original>
    <variation>MTRRQQVLQAKRSIQQTFQAQLMPWKSMFHGREVKPVGPDLEL</variation>
    <location>
        <begin position="1"/>
        <end position="28"/>
    </location>
</feature>
<feature type="splice variant" id="VSP_042885" description="In isoform 4." evidence="3">
    <original>MTELQQDVEDTKPAKVLGKRESKLGSAH</original>
    <variation>MSKVKRFPFFFS</variation>
    <location>
        <begin position="1"/>
        <end position="28"/>
    </location>
</feature>
<feature type="splice variant" id="VSP_044299" description="In isoform 5." evidence="3">
    <original>Q</original>
    <variation>M</variation>
    <location>
        <position position="105"/>
    </location>
</feature>
<feature type="sequence conflict" description="In Ref. 1; AAM77213 and 2; BAB15045." evidence="4" ref="1 2">
    <original>Q</original>
    <variation>R</variation>
    <location>
        <position position="260"/>
    </location>
</feature>
<sequence length="432" mass="47869">MTELQQDVEDTKPAKVLGKRESKLGSAHSEAENGVEEKKKACRSPTAQSPTPSVEADSPDQKKIISLWSKSSFDGASLASDKNDCKTESKNDPKTERKKSSSSSQYKANMHFHKLFLSVPTEEPLKQSFTCALQKEILYQGKLFVSENWICFHSKVFGKDTKISIPAFSVTLIKKTKTALLVPNALIIATVTDRYIFVSLLSRDSTYKLLKSVCGHLENTSVGNSPNPSSAENSFRADRPSSLPLDFNDEFSDLDGVVQQRRQDMEGYSSSGSQTPESENSRDFHATESQTVLNVSKGEAKPTRADAHVNRVPEGKAKSLPVQGLSETVGILHKVKSQKCPMLHHILIFYAIVVCALIISTFYMRYRINTLEEQLGLLTSIVDTHNTEQAAPSGLRSQVQFNVEVLCQELTANIVKLEKIQNNLQKLLENGD</sequence>
<keyword id="KW-0007">Acetylation</keyword>
<keyword id="KW-0025">Alternative splicing</keyword>
<keyword id="KW-0597">Phosphoprotein</keyword>
<keyword id="KW-1267">Proteomics identification</keyword>
<keyword id="KW-1185">Reference proteome</keyword>